<keyword id="KW-0010">Activator</keyword>
<keyword id="KW-0025">Alternative splicing</keyword>
<keyword id="KW-0122">Cardiomyopathy</keyword>
<keyword id="KW-0221">Differentiation</keyword>
<keyword id="KW-0225">Disease variant</keyword>
<keyword id="KW-0238">DNA-binding</keyword>
<keyword id="KW-0334">Gonadal differentiation</keyword>
<keyword id="KW-1017">Isopeptide bond</keyword>
<keyword id="KW-0479">Metal-binding</keyword>
<keyword id="KW-0539">Nucleus</keyword>
<keyword id="KW-0597">Phosphoprotein</keyword>
<keyword id="KW-1267">Proteomics identification</keyword>
<keyword id="KW-1185">Reference proteome</keyword>
<keyword id="KW-0677">Repeat</keyword>
<keyword id="KW-0678">Repressor</keyword>
<keyword id="KW-0804">Transcription</keyword>
<keyword id="KW-0805">Transcription regulation</keyword>
<keyword id="KW-0832">Ubl conjugation</keyword>
<keyword id="KW-0862">Zinc</keyword>
<keyword id="KW-0863">Zinc-finger</keyword>
<name>FOG2_HUMAN</name>
<dbReference type="EMBL" id="AF119334">
    <property type="protein sequence ID" value="AAD49558.1"/>
    <property type="molecule type" value="mRNA"/>
</dbReference>
<dbReference type="EMBL" id="BC020928">
    <property type="protein sequence ID" value="AAH20928.1"/>
    <property type="molecule type" value="mRNA"/>
</dbReference>
<dbReference type="EMBL" id="BC109222">
    <property type="protein sequence ID" value="AAI09223.1"/>
    <property type="molecule type" value="mRNA"/>
</dbReference>
<dbReference type="EMBL" id="AL389987">
    <property type="protein sequence ID" value="CAB97539.1"/>
    <property type="molecule type" value="mRNA"/>
</dbReference>
<dbReference type="EMBL" id="AL389989">
    <property type="protein sequence ID" value="CAB97541.1"/>
    <property type="molecule type" value="mRNA"/>
</dbReference>
<dbReference type="CCDS" id="CCDS47908.1">
    <molecule id="Q8WW38-1"/>
</dbReference>
<dbReference type="CCDS" id="CCDS94333.1">
    <molecule id="Q8WW38-2"/>
</dbReference>
<dbReference type="RefSeq" id="NP_036214.2">
    <molecule id="Q8WW38-1"/>
    <property type="nucleotide sequence ID" value="NM_012082.4"/>
</dbReference>
<dbReference type="BioGRID" id="116986">
    <property type="interactions" value="25"/>
</dbReference>
<dbReference type="ELM" id="Q8WW38"/>
<dbReference type="FunCoup" id="Q8WW38">
    <property type="interactions" value="2288"/>
</dbReference>
<dbReference type="IntAct" id="Q8WW38">
    <property type="interactions" value="16"/>
</dbReference>
<dbReference type="MINT" id="Q8WW38"/>
<dbReference type="STRING" id="9606.ENSP00000384179"/>
<dbReference type="iPTMnet" id="Q8WW38"/>
<dbReference type="PhosphoSitePlus" id="Q8WW38"/>
<dbReference type="BioMuta" id="ZFPM2"/>
<dbReference type="DMDM" id="126302543"/>
<dbReference type="jPOST" id="Q8WW38"/>
<dbReference type="MassIVE" id="Q8WW38"/>
<dbReference type="PaxDb" id="9606-ENSP00000384179"/>
<dbReference type="PeptideAtlas" id="Q8WW38"/>
<dbReference type="ProteomicsDB" id="74858">
    <molecule id="Q8WW38-1"/>
</dbReference>
<dbReference type="ProteomicsDB" id="74859">
    <molecule id="Q8WW38-2"/>
</dbReference>
<dbReference type="Pumba" id="Q8WW38"/>
<dbReference type="Antibodypedia" id="1311">
    <property type="antibodies" value="137 antibodies from 27 providers"/>
</dbReference>
<dbReference type="DNASU" id="23414"/>
<dbReference type="Ensembl" id="ENST00000407775.7">
    <molecule id="Q8WW38-1"/>
    <property type="protein sequence ID" value="ENSP00000384179.2"/>
    <property type="gene ID" value="ENSG00000169946.14"/>
</dbReference>
<dbReference type="GeneID" id="23414"/>
<dbReference type="KEGG" id="hsa:23414"/>
<dbReference type="MANE-Select" id="ENST00000407775.7">
    <property type="protein sequence ID" value="ENSP00000384179.2"/>
    <property type="RefSeq nucleotide sequence ID" value="NM_012082.4"/>
    <property type="RefSeq protein sequence ID" value="NP_036214.2"/>
</dbReference>
<dbReference type="UCSC" id="uc003ymd.4">
    <molecule id="Q8WW38-1"/>
    <property type="organism name" value="human"/>
</dbReference>
<dbReference type="AGR" id="HGNC:16700"/>
<dbReference type="CTD" id="23414"/>
<dbReference type="DisGeNET" id="23414"/>
<dbReference type="GeneCards" id="ZFPM2"/>
<dbReference type="HGNC" id="HGNC:16700">
    <property type="gene designation" value="ZFPM2"/>
</dbReference>
<dbReference type="HPA" id="ENSG00000169946">
    <property type="expression patterns" value="Tissue enhanced (brain, ovary)"/>
</dbReference>
<dbReference type="MalaCards" id="ZFPM2"/>
<dbReference type="MIM" id="187500">
    <property type="type" value="phenotype"/>
</dbReference>
<dbReference type="MIM" id="217095">
    <property type="type" value="phenotype"/>
</dbReference>
<dbReference type="MIM" id="603693">
    <property type="type" value="gene"/>
</dbReference>
<dbReference type="MIM" id="610187">
    <property type="type" value="phenotype"/>
</dbReference>
<dbReference type="MIM" id="616067">
    <property type="type" value="phenotype"/>
</dbReference>
<dbReference type="neXtProt" id="NX_Q8WW38"/>
<dbReference type="OpenTargets" id="ENSG00000169946"/>
<dbReference type="Orphanet" id="251510">
    <property type="disease" value="46,XY partial gonadal dysgenesis"/>
</dbReference>
<dbReference type="Orphanet" id="2140">
    <property type="disease" value="Congenital diaphragmatic hernia"/>
</dbReference>
<dbReference type="Orphanet" id="3303">
    <property type="disease" value="Tetralogy of Fallot"/>
</dbReference>
<dbReference type="PharmGKB" id="PA134947303"/>
<dbReference type="VEuPathDB" id="HostDB:ENSG00000169946"/>
<dbReference type="eggNOG" id="KOG1721">
    <property type="taxonomic scope" value="Eukaryota"/>
</dbReference>
<dbReference type="GeneTree" id="ENSGT00530000063823"/>
<dbReference type="InParanoid" id="Q8WW38"/>
<dbReference type="OMA" id="VEFFCNK"/>
<dbReference type="OrthoDB" id="9872130at2759"/>
<dbReference type="PAN-GO" id="Q8WW38">
    <property type="GO annotations" value="5 GO annotations based on evolutionary models"/>
</dbReference>
<dbReference type="PhylomeDB" id="Q8WW38"/>
<dbReference type="TreeFam" id="TF331342"/>
<dbReference type="PathwayCommons" id="Q8WW38"/>
<dbReference type="Reactome" id="R-HSA-9690406">
    <property type="pathway name" value="Transcriptional regulation of testis differentiation"/>
</dbReference>
<dbReference type="Reactome" id="R-HSA-983231">
    <property type="pathway name" value="Factors involved in megakaryocyte development and platelet production"/>
</dbReference>
<dbReference type="SignaLink" id="Q8WW38"/>
<dbReference type="SIGNOR" id="Q8WW38"/>
<dbReference type="BioGRID-ORCS" id="23414">
    <property type="hits" value="12 hits in 1178 CRISPR screens"/>
</dbReference>
<dbReference type="ChiTaRS" id="ZFPM2">
    <property type="organism name" value="human"/>
</dbReference>
<dbReference type="GeneWiki" id="ZFPM2"/>
<dbReference type="GenomeRNAi" id="23414"/>
<dbReference type="Pharos" id="Q8WW38">
    <property type="development level" value="Tbio"/>
</dbReference>
<dbReference type="PRO" id="PR:Q8WW38"/>
<dbReference type="Proteomes" id="UP000005640">
    <property type="component" value="Chromosome 8"/>
</dbReference>
<dbReference type="RNAct" id="Q8WW38">
    <property type="molecule type" value="protein"/>
</dbReference>
<dbReference type="Bgee" id="ENSG00000169946">
    <property type="expression patterns" value="Expressed in skeletal muscle tissue of biceps brachii and 163 other cell types or tissues"/>
</dbReference>
<dbReference type="ExpressionAtlas" id="Q8WW38">
    <property type="expression patterns" value="baseline and differential"/>
</dbReference>
<dbReference type="GO" id="GO:0000785">
    <property type="term" value="C:chromatin"/>
    <property type="evidence" value="ECO:0000247"/>
    <property type="project" value="NTNU_SB"/>
</dbReference>
<dbReference type="GO" id="GO:0005737">
    <property type="term" value="C:cytoplasm"/>
    <property type="evidence" value="ECO:0007669"/>
    <property type="project" value="Ensembl"/>
</dbReference>
<dbReference type="GO" id="GO:0001673">
    <property type="term" value="C:male germ cell nucleus"/>
    <property type="evidence" value="ECO:0007669"/>
    <property type="project" value="Ensembl"/>
</dbReference>
<dbReference type="GO" id="GO:0005654">
    <property type="term" value="C:nucleoplasm"/>
    <property type="evidence" value="ECO:0000314"/>
    <property type="project" value="HPA"/>
</dbReference>
<dbReference type="GO" id="GO:0005634">
    <property type="term" value="C:nucleus"/>
    <property type="evidence" value="ECO:0000318"/>
    <property type="project" value="GO_Central"/>
</dbReference>
<dbReference type="GO" id="GO:0003677">
    <property type="term" value="F:DNA binding"/>
    <property type="evidence" value="ECO:0007669"/>
    <property type="project" value="UniProtKB-KW"/>
</dbReference>
<dbReference type="GO" id="GO:0061629">
    <property type="term" value="F:RNA polymerase II-specific DNA-binding transcription factor binding"/>
    <property type="evidence" value="ECO:0000353"/>
    <property type="project" value="BHF-UCL"/>
</dbReference>
<dbReference type="GO" id="GO:0003713">
    <property type="term" value="F:transcription coactivator activity"/>
    <property type="evidence" value="ECO:0000314"/>
    <property type="project" value="BHF-UCL"/>
</dbReference>
<dbReference type="GO" id="GO:0003714">
    <property type="term" value="F:transcription corepressor activity"/>
    <property type="evidence" value="ECO:0000314"/>
    <property type="project" value="BHF-UCL"/>
</dbReference>
<dbReference type="GO" id="GO:0008270">
    <property type="term" value="F:zinc ion binding"/>
    <property type="evidence" value="ECO:0000303"/>
    <property type="project" value="BHF-UCL"/>
</dbReference>
<dbReference type="GO" id="GO:0030154">
    <property type="term" value="P:cell differentiation"/>
    <property type="evidence" value="ECO:0000318"/>
    <property type="project" value="GO_Central"/>
</dbReference>
<dbReference type="GO" id="GO:0048568">
    <property type="term" value="P:embryonic organ development"/>
    <property type="evidence" value="ECO:0007669"/>
    <property type="project" value="Ensembl"/>
</dbReference>
<dbReference type="GO" id="GO:0045444">
    <property type="term" value="P:fat cell differentiation"/>
    <property type="evidence" value="ECO:0000315"/>
    <property type="project" value="UniProtKB"/>
</dbReference>
<dbReference type="GO" id="GO:0007506">
    <property type="term" value="P:gonadal mesoderm development"/>
    <property type="evidence" value="ECO:0007669"/>
    <property type="project" value="UniProtKB-KW"/>
</dbReference>
<dbReference type="GO" id="GO:0007507">
    <property type="term" value="P:heart development"/>
    <property type="evidence" value="ECO:0000318"/>
    <property type="project" value="GO_Central"/>
</dbReference>
<dbReference type="GO" id="GO:0001701">
    <property type="term" value="P:in utero embryonic development"/>
    <property type="evidence" value="ECO:0007669"/>
    <property type="project" value="Ensembl"/>
</dbReference>
<dbReference type="GO" id="GO:0030324">
    <property type="term" value="P:lung development"/>
    <property type="evidence" value="ECO:0007669"/>
    <property type="project" value="Ensembl"/>
</dbReference>
<dbReference type="GO" id="GO:0045892">
    <property type="term" value="P:negative regulation of DNA-templated transcription"/>
    <property type="evidence" value="ECO:0000314"/>
    <property type="project" value="UniProtKB"/>
</dbReference>
<dbReference type="GO" id="GO:0045599">
    <property type="term" value="P:negative regulation of fat cell differentiation"/>
    <property type="evidence" value="ECO:0007669"/>
    <property type="project" value="Ensembl"/>
</dbReference>
<dbReference type="GO" id="GO:2000195">
    <property type="term" value="P:negative regulation of female gonad development"/>
    <property type="evidence" value="ECO:0007669"/>
    <property type="project" value="Ensembl"/>
</dbReference>
<dbReference type="GO" id="GO:0000122">
    <property type="term" value="P:negative regulation of transcription by RNA polymerase II"/>
    <property type="evidence" value="ECO:0000314"/>
    <property type="project" value="BHF-UCL"/>
</dbReference>
<dbReference type="GO" id="GO:0003148">
    <property type="term" value="P:outflow tract septum morphogenesis"/>
    <property type="evidence" value="ECO:0000315"/>
    <property type="project" value="BHF-UCL"/>
</dbReference>
<dbReference type="GO" id="GO:0060045">
    <property type="term" value="P:positive regulation of cardiac muscle cell proliferation"/>
    <property type="evidence" value="ECO:0000250"/>
    <property type="project" value="BHF-UCL"/>
</dbReference>
<dbReference type="GO" id="GO:2000020">
    <property type="term" value="P:positive regulation of male gonad development"/>
    <property type="evidence" value="ECO:0007669"/>
    <property type="project" value="Ensembl"/>
</dbReference>
<dbReference type="GO" id="GO:0045944">
    <property type="term" value="P:positive regulation of transcription by RNA polymerase II"/>
    <property type="evidence" value="ECO:0000314"/>
    <property type="project" value="BHF-UCL"/>
</dbReference>
<dbReference type="GO" id="GO:0003221">
    <property type="term" value="P:right ventricular cardiac muscle tissue morphogenesis"/>
    <property type="evidence" value="ECO:0000315"/>
    <property type="project" value="BHF-UCL"/>
</dbReference>
<dbReference type="GO" id="GO:0001570">
    <property type="term" value="P:vasculogenesis"/>
    <property type="evidence" value="ECO:0007669"/>
    <property type="project" value="Ensembl"/>
</dbReference>
<dbReference type="GO" id="GO:0060412">
    <property type="term" value="P:ventricular septum morphogenesis"/>
    <property type="evidence" value="ECO:0000315"/>
    <property type="project" value="BHF-UCL"/>
</dbReference>
<dbReference type="CDD" id="cd19216">
    <property type="entry name" value="PR-SET_ZFPM2"/>
    <property type="match status" value="1"/>
</dbReference>
<dbReference type="FunFam" id="3.30.160.60:FF:000828">
    <property type="entry name" value="Zinc finger protein, FOG family member 1"/>
    <property type="match status" value="1"/>
</dbReference>
<dbReference type="FunFam" id="3.30.160.60:FF:001371">
    <property type="entry name" value="Zinc finger protein, FOG family member 2"/>
    <property type="match status" value="1"/>
</dbReference>
<dbReference type="Gene3D" id="3.30.160.60">
    <property type="entry name" value="Classic Zinc Finger"/>
    <property type="match status" value="2"/>
</dbReference>
<dbReference type="InterPro" id="IPR039746">
    <property type="entry name" value="FOG"/>
</dbReference>
<dbReference type="InterPro" id="IPR034731">
    <property type="entry name" value="ZF_CCHC_FOG"/>
</dbReference>
<dbReference type="InterPro" id="IPR049361">
    <property type="entry name" value="ZFPM1/2_PR"/>
</dbReference>
<dbReference type="InterPro" id="IPR036236">
    <property type="entry name" value="Znf_C2H2_sf"/>
</dbReference>
<dbReference type="InterPro" id="IPR013087">
    <property type="entry name" value="Znf_C2H2_type"/>
</dbReference>
<dbReference type="PANTHER" id="PTHR12958">
    <property type="entry name" value="FRIEND OF GATA2-RELATED"/>
    <property type="match status" value="1"/>
</dbReference>
<dbReference type="PANTHER" id="PTHR12958:SF5">
    <property type="entry name" value="ZINC FINGER PROTEIN ZFPM2"/>
    <property type="match status" value="1"/>
</dbReference>
<dbReference type="Pfam" id="PF25445">
    <property type="entry name" value="CCHC_ZFPM2"/>
    <property type="match status" value="1"/>
</dbReference>
<dbReference type="Pfam" id="PF21182">
    <property type="entry name" value="FOG1-like_PR"/>
    <property type="match status" value="1"/>
</dbReference>
<dbReference type="SMART" id="SM00355">
    <property type="entry name" value="ZnF_C2H2"/>
    <property type="match status" value="8"/>
</dbReference>
<dbReference type="SUPFAM" id="SSF57667">
    <property type="entry name" value="beta-beta-alpha zinc fingers"/>
    <property type="match status" value="6"/>
</dbReference>
<dbReference type="PROSITE" id="PS51810">
    <property type="entry name" value="ZF_CCHC_FOG"/>
    <property type="match status" value="5"/>
</dbReference>
<dbReference type="PROSITE" id="PS00028">
    <property type="entry name" value="ZINC_FINGER_C2H2_1"/>
    <property type="match status" value="2"/>
</dbReference>
<dbReference type="PROSITE" id="PS50157">
    <property type="entry name" value="ZINC_FINGER_C2H2_2"/>
    <property type="match status" value="2"/>
</dbReference>
<gene>
    <name type="primary">ZFPM2</name>
    <name type="synonym">FOG2</name>
    <name type="synonym">ZNF89B</name>
</gene>
<feature type="chain" id="PRO_0000221043" description="Zinc finger protein ZFPM2">
    <location>
        <begin position="1"/>
        <end position="1151"/>
    </location>
</feature>
<feature type="zinc finger region" description="CCHC FOG-type 1" evidence="4">
    <location>
        <begin position="244"/>
        <end position="277"/>
    </location>
</feature>
<feature type="zinc finger region" description="C2H2-type 1" evidence="3">
    <location>
        <begin position="296"/>
        <end position="320"/>
    </location>
</feature>
<feature type="zinc finger region" description="C2H2-type 2" evidence="3">
    <location>
        <begin position="335"/>
        <end position="357"/>
    </location>
</feature>
<feature type="zinc finger region" description="C2H2-type 3" evidence="3">
    <location>
        <begin position="363"/>
        <end position="385"/>
    </location>
</feature>
<feature type="zinc finger region" description="CCHC FOG-type 2" evidence="4">
    <location>
        <begin position="542"/>
        <end position="575"/>
    </location>
</feature>
<feature type="zinc finger region" description="CCHC FOG-type 3" evidence="4">
    <location>
        <begin position="681"/>
        <end position="714"/>
    </location>
</feature>
<feature type="zinc finger region" description="CCHC FOG-type 4" evidence="4">
    <location>
        <begin position="848"/>
        <end position="881"/>
    </location>
</feature>
<feature type="zinc finger region" description="CCHC FOG-type 5" evidence="4">
    <location>
        <begin position="1113"/>
        <end position="1146"/>
    </location>
</feature>
<feature type="region of interest" description="Disordered" evidence="5">
    <location>
        <begin position="1"/>
        <end position="102"/>
    </location>
</feature>
<feature type="region of interest" description="Disordered" evidence="5">
    <location>
        <begin position="389"/>
        <end position="487"/>
    </location>
</feature>
<feature type="region of interest" description="Disordered" evidence="5">
    <location>
        <begin position="636"/>
        <end position="683"/>
    </location>
</feature>
<feature type="region of interest" description="Interaction with CTBP2" evidence="13">
    <location>
        <begin position="829"/>
        <end position="835"/>
    </location>
</feature>
<feature type="region of interest" description="Disordered" evidence="5">
    <location>
        <begin position="1051"/>
        <end position="1095"/>
    </location>
</feature>
<feature type="short sequence motif" description="Nuclear localization signal" evidence="1">
    <location>
        <begin position="736"/>
        <end position="740"/>
    </location>
</feature>
<feature type="compositionally biased region" description="Basic residues" evidence="5">
    <location>
        <begin position="1"/>
        <end position="13"/>
    </location>
</feature>
<feature type="compositionally biased region" description="Acidic residues" evidence="5">
    <location>
        <begin position="18"/>
        <end position="33"/>
    </location>
</feature>
<feature type="compositionally biased region" description="Acidic residues" evidence="5">
    <location>
        <begin position="70"/>
        <end position="82"/>
    </location>
</feature>
<feature type="compositionally biased region" description="Polar residues" evidence="5">
    <location>
        <begin position="401"/>
        <end position="410"/>
    </location>
</feature>
<feature type="compositionally biased region" description="Polar residues" evidence="5">
    <location>
        <begin position="419"/>
        <end position="431"/>
    </location>
</feature>
<feature type="compositionally biased region" description="Polar residues" evidence="5">
    <location>
        <begin position="447"/>
        <end position="485"/>
    </location>
</feature>
<feature type="compositionally biased region" description="Polar residues" evidence="5">
    <location>
        <begin position="647"/>
        <end position="658"/>
    </location>
</feature>
<feature type="compositionally biased region" description="Polar residues" evidence="5">
    <location>
        <begin position="1057"/>
        <end position="1067"/>
    </location>
</feature>
<feature type="binding site" evidence="4">
    <location>
        <position position="252"/>
    </location>
    <ligand>
        <name>Zn(2+)</name>
        <dbReference type="ChEBI" id="CHEBI:29105"/>
        <label>1</label>
    </ligand>
</feature>
<feature type="binding site" evidence="4">
    <location>
        <position position="255"/>
    </location>
    <ligand>
        <name>Zn(2+)</name>
        <dbReference type="ChEBI" id="CHEBI:29105"/>
        <label>1</label>
    </ligand>
</feature>
<feature type="binding site" evidence="4">
    <location>
        <position position="268"/>
    </location>
    <ligand>
        <name>Zn(2+)</name>
        <dbReference type="ChEBI" id="CHEBI:29105"/>
        <label>1</label>
    </ligand>
</feature>
<feature type="binding site" evidence="4">
    <location>
        <position position="273"/>
    </location>
    <ligand>
        <name>Zn(2+)</name>
        <dbReference type="ChEBI" id="CHEBI:29105"/>
        <label>1</label>
    </ligand>
</feature>
<feature type="binding site" evidence="4">
    <location>
        <position position="550"/>
    </location>
    <ligand>
        <name>Zn(2+)</name>
        <dbReference type="ChEBI" id="CHEBI:29105"/>
        <label>2</label>
    </ligand>
</feature>
<feature type="binding site" evidence="4">
    <location>
        <position position="553"/>
    </location>
    <ligand>
        <name>Zn(2+)</name>
        <dbReference type="ChEBI" id="CHEBI:29105"/>
        <label>2</label>
    </ligand>
</feature>
<feature type="binding site" evidence="4">
    <location>
        <position position="566"/>
    </location>
    <ligand>
        <name>Zn(2+)</name>
        <dbReference type="ChEBI" id="CHEBI:29105"/>
        <label>2</label>
    </ligand>
</feature>
<feature type="binding site" evidence="4">
    <location>
        <position position="571"/>
    </location>
    <ligand>
        <name>Zn(2+)</name>
        <dbReference type="ChEBI" id="CHEBI:29105"/>
        <label>2</label>
    </ligand>
</feature>
<feature type="binding site" evidence="4">
    <location>
        <position position="689"/>
    </location>
    <ligand>
        <name>Zn(2+)</name>
        <dbReference type="ChEBI" id="CHEBI:29105"/>
        <label>3</label>
    </ligand>
</feature>
<feature type="binding site" evidence="4">
    <location>
        <position position="692"/>
    </location>
    <ligand>
        <name>Zn(2+)</name>
        <dbReference type="ChEBI" id="CHEBI:29105"/>
        <label>3</label>
    </ligand>
</feature>
<feature type="binding site" evidence="4">
    <location>
        <position position="705"/>
    </location>
    <ligand>
        <name>Zn(2+)</name>
        <dbReference type="ChEBI" id="CHEBI:29105"/>
        <label>3</label>
    </ligand>
</feature>
<feature type="binding site" evidence="4">
    <location>
        <position position="710"/>
    </location>
    <ligand>
        <name>Zn(2+)</name>
        <dbReference type="ChEBI" id="CHEBI:29105"/>
        <label>3</label>
    </ligand>
</feature>
<feature type="binding site" evidence="4">
    <location>
        <position position="856"/>
    </location>
    <ligand>
        <name>Zn(2+)</name>
        <dbReference type="ChEBI" id="CHEBI:29105"/>
        <label>4</label>
    </ligand>
</feature>
<feature type="binding site" evidence="4">
    <location>
        <position position="859"/>
    </location>
    <ligand>
        <name>Zn(2+)</name>
        <dbReference type="ChEBI" id="CHEBI:29105"/>
        <label>4</label>
    </ligand>
</feature>
<feature type="binding site" evidence="4">
    <location>
        <position position="872"/>
    </location>
    <ligand>
        <name>Zn(2+)</name>
        <dbReference type="ChEBI" id="CHEBI:29105"/>
        <label>4</label>
    </ligand>
</feature>
<feature type="binding site" evidence="4">
    <location>
        <position position="877"/>
    </location>
    <ligand>
        <name>Zn(2+)</name>
        <dbReference type="ChEBI" id="CHEBI:29105"/>
        <label>4</label>
    </ligand>
</feature>
<feature type="binding site" evidence="4">
    <location>
        <position position="1121"/>
    </location>
    <ligand>
        <name>Zn(2+)</name>
        <dbReference type="ChEBI" id="CHEBI:29105"/>
        <label>5</label>
    </ligand>
</feature>
<feature type="binding site" evidence="4">
    <location>
        <position position="1124"/>
    </location>
    <ligand>
        <name>Zn(2+)</name>
        <dbReference type="ChEBI" id="CHEBI:29105"/>
        <label>5</label>
    </ligand>
</feature>
<feature type="binding site" evidence="4">
    <location>
        <position position="1137"/>
    </location>
    <ligand>
        <name>Zn(2+)</name>
        <dbReference type="ChEBI" id="CHEBI:29105"/>
        <label>5</label>
    </ligand>
</feature>
<feature type="binding site" evidence="4">
    <location>
        <position position="1142"/>
    </location>
    <ligand>
        <name>Zn(2+)</name>
        <dbReference type="ChEBI" id="CHEBI:29105"/>
        <label>5</label>
    </ligand>
</feature>
<feature type="modified residue" description="Phosphoserine" evidence="14">
    <location>
        <position position="532"/>
    </location>
</feature>
<feature type="modified residue" description="Phosphoserine" evidence="14">
    <location>
        <position position="581"/>
    </location>
</feature>
<feature type="modified residue" description="Phosphoserine" evidence="14">
    <location>
        <position position="904"/>
    </location>
</feature>
<feature type="modified residue" description="Phosphoserine" evidence="14">
    <location>
        <position position="1014"/>
    </location>
</feature>
<feature type="cross-link" description="Glycyl lysine isopeptide (Lys-Gly) (interchain with G-Cter in SUMO1)" evidence="10">
    <location>
        <position position="324"/>
    </location>
</feature>
<feature type="cross-link" description="Glycyl lysine isopeptide (Lys-Gly) (interchain with G-Cter in SUMO2)" evidence="15">
    <location>
        <position position="444"/>
    </location>
</feature>
<feature type="cross-link" description="Glycyl lysine isopeptide (Lys-Gly) (interchain with G-Cter in SUMO1)" evidence="10">
    <location>
        <position position="471"/>
    </location>
</feature>
<feature type="cross-link" description="Glycyl lysine isopeptide (Lys-Gly) (interchain with G-Cter in SUMO1)" evidence="10">
    <location>
        <position position="915"/>
    </location>
</feature>
<feature type="cross-link" description="Glycyl lysine isopeptide (Lys-Gly) (interchain with G-Cter in SUMO1)" evidence="10">
    <location>
        <position position="955"/>
    </location>
</feature>
<feature type="splice variant" id="VSP_009701" description="In isoform 2." evidence="12">
    <location>
        <begin position="1"/>
        <end position="132"/>
    </location>
</feature>
<feature type="splice variant" id="VSP_009702" description="In isoform 2." evidence="12">
    <original>KDIFPCKSCGIWYRSERNLQAHLMYYCSGRQREAAPVSEEN</original>
    <variation>SKCSVLCSPALEVMGIYGRKKCLLTRNQEQTFFLQKKKKKK</variation>
    <location>
        <begin position="247"/>
        <end position="287"/>
    </location>
</feature>
<feature type="sequence variant" id="VAR_017942" description="In TOF and CTHM; does not affect its ability to interact with GATA4; dbSNP:rs121908601." evidence="7 9">
    <original>E</original>
    <variation>G</variation>
    <location>
        <position position="30"/>
    </location>
</feature>
<feature type="sequence variant" id="VAR_072074" description="In CTHM; dbSNP:rs202204708." evidence="9">
    <original>I</original>
    <variation>V</variation>
    <location>
        <position position="227"/>
    </location>
</feature>
<feature type="sequence variant" id="VAR_071104" description="In SRXY9; results in reduced transactivation activity on the AMH promoter; does not affect its ability to interact with GATA4; dbSNP:rs200834568." evidence="11">
    <original>R</original>
    <variation>Q</variation>
    <location>
        <position position="260"/>
    </location>
</feature>
<feature type="sequence variant" id="VAR_071105" description="In SRXY9; results in reduced transactivation activity on the AMH promoter; abolished its ability to interact with GATA4; dbSNP:rs606231252." evidence="11">
    <original>S</original>
    <variation>R</variation>
    <location>
        <position position="402"/>
    </location>
</feature>
<feature type="sequence variant" id="VAR_024178" description="In dbSNP:rs11993776." evidence="11">
    <original>A</original>
    <variation>G</variation>
    <location>
        <position position="403"/>
    </location>
</feature>
<feature type="sequence variant" id="VAR_072075" description="In SRXY9 and TOF; reduced its ability to interact with GATA4; dbSNP:rs187043152." evidence="9 11">
    <original>M</original>
    <variation>I</variation>
    <location>
        <position position="544"/>
    </location>
</feature>
<feature type="sequence variant" id="VAR_017943" description="In TOF; slightly impairs its ability to interact with GATA4; dbSNP:rs28374544." evidence="7">
    <original>S</original>
    <variation>G</variation>
    <location>
        <position position="657"/>
    </location>
</feature>
<feature type="sequence variant" id="VAR_017944" description="In dbSNP:rs2920048." evidence="11">
    <original>E</original>
    <variation>D</variation>
    <location>
        <position position="782"/>
    </location>
</feature>
<feature type="sequence variant" id="VAR_030760" description="In dbSNP:rs16873741.">
    <original>A</original>
    <variation>V</variation>
    <location>
        <position position="1055"/>
    </location>
</feature>
<feature type="sequence conflict" description="In Ref. 3; CAB97541." evidence="13" ref="3">
    <original>F</original>
    <variation>L</variation>
    <location>
        <position position="198"/>
    </location>
</feature>
<feature type="sequence conflict" description="In Ref. 1; AAD49558." evidence="13" ref="1">
    <original>L</original>
    <variation>P</variation>
    <location>
        <position position="939"/>
    </location>
</feature>
<comment type="function">
    <text evidence="1 6">Transcription regulator that plays a central role in heart morphogenesis and development of coronary vessels from epicardium, by regulating genes that are essential during cardiogenesis. Essential cofactor that acts via the formation of a heterodimer with transcription factors of the GATA family GATA4, GATA5 and GATA6. Such heterodimer can both activate or repress transcriptional activity, depending on the cell and promoter context. Also required in gonadal differentiation, possibly be regulating expression of SRY. Probably acts a corepressor of NR2F2 (By similarity).</text>
</comment>
<comment type="subunit">
    <text evidence="2 6 11">Interacts with the N-terminal zinc-finger of GATA4, GATA5 and probably GATA6. Interacts with retinoid nuclear receptor RXRA when ligand bound (By similarity). Interacts with corepressor CTBP2; this interaction is however not essential for corepressor activity. Able to bind GATA1 in vitro. Interacts with NR2F2 and NR2F6 (By similarity). Interacts with ATOH8; mediates indirect interaction with GATA4 (By similarity).</text>
</comment>
<comment type="interaction">
    <interactant intactId="EBI-947213">
        <id>Q8WW38</id>
    </interactant>
    <interactant intactId="EBI-10976677">
        <id>G5E9A7</id>
        <label>DMWD</label>
    </interactant>
    <organismsDiffer>false</organismsDiffer>
    <experiments>3</experiments>
</comment>
<comment type="interaction">
    <interactant intactId="EBI-947213">
        <id>Q8WW38</id>
    </interactant>
    <interactant intactId="EBI-744302">
        <id>P14136</id>
        <label>GFAP</label>
    </interactant>
    <organismsDiffer>false</organismsDiffer>
    <experiments>3</experiments>
</comment>
<comment type="interaction">
    <interactant intactId="EBI-947213">
        <id>Q8WW38</id>
    </interactant>
    <interactant intactId="EBI-351935">
        <id>P02545</id>
        <label>LMNA</label>
    </interactant>
    <organismsDiffer>false</organismsDiffer>
    <experiments>3</experiments>
</comment>
<comment type="interaction">
    <interactant intactId="EBI-947213">
        <id>Q8WW38</id>
    </interactant>
    <interactant intactId="EBI-744322">
        <id>O43395</id>
        <label>PRPF3</label>
    </interactant>
    <organismsDiffer>false</organismsDiffer>
    <experiments>3</experiments>
</comment>
<comment type="interaction">
    <interactant intactId="EBI-947213">
        <id>Q8WW38</id>
    </interactant>
    <interactant intactId="EBI-5235340">
        <id>Q7Z699</id>
        <label>SPRED1</label>
    </interactant>
    <organismsDiffer>false</organismsDiffer>
    <experiments>3</experiments>
</comment>
<comment type="subcellular location">
    <subcellularLocation>
        <location evidence="10">Nucleus</location>
    </subcellularLocation>
</comment>
<comment type="alternative products">
    <event type="alternative splicing"/>
    <isoform>
        <id>Q8WW38-1</id>
        <name>1</name>
        <sequence type="displayed"/>
    </isoform>
    <isoform>
        <id>Q8WW38-2</id>
        <name>2</name>
        <sequence type="described" ref="VSP_009701 VSP_009702"/>
    </isoform>
</comment>
<comment type="tissue specificity">
    <text evidence="6">Widely expressed at low level.</text>
</comment>
<comment type="domain">
    <text evidence="1">The CCHC FOG-type zinc fingers 1, 2, 3 and 5 directly bind to GATA-type zinc fingers. The Tyr residue adjacent to the last Cys of the CCHC FOG-type zinc finger is essential for the interaction with GATA-type zinc fingers (By similarity).</text>
</comment>
<comment type="PTM">
    <text evidence="10">Sumoylation reduces transcriptional repression activity.</text>
</comment>
<comment type="disease" evidence="7 9">
    <disease id="DI-02362">
        <name>Tetralogy of Fallot</name>
        <acronym>TOF</acronym>
        <description>A congenital heart anomaly which consists of pulmonary stenosis, ventricular septal defect, dextroposition of the aorta (aorta is on the right side instead of the left) and hypertrophy of the right ventricle. In this condition, blood from both ventricles (oxygen-rich and oxygen-poor) is pumped into the body often causing cyanosis.</description>
        <dbReference type="MIM" id="187500"/>
    </disease>
    <text>The disease may be caused by variants affecting the gene represented in this entry.</text>
</comment>
<comment type="disease" evidence="8">
    <disease id="DI-01485">
        <name>Diaphragmatic hernia 3</name>
        <acronym>DIH3</acronym>
        <description>A form of congenital diaphragmatic hernia, a posterolateral defect of the diaphragm, generally located on the left side, that permits the herniation of abdominal viscera into the thorax. The lungs are hypoplastic and have abnormal vessels that cause respiratory insufficiency and persistent pulmonary hypertension with high mortality. About one third of cases have cardiovascular malformations and lesser proportions have skeletal, neural, genitourinary, gastrointestinal or other defects.</description>
        <dbReference type="MIM" id="610187"/>
    </disease>
    <text>The disease is caused by variants affecting the gene represented in this entry.</text>
</comment>
<comment type="disease" evidence="11">
    <disease id="DI-04251">
        <name>46,XY sex reversal 9</name>
        <acronym>SRXY9</acronym>
        <description>A disorder of sex development. Affected individuals have a 46,XY karyotype but present as phenotypically normal females or have ambiguous external genitalia.</description>
        <dbReference type="MIM" id="616067"/>
    </disease>
    <text>The disease is caused by variants affecting the gene represented in this entry.</text>
</comment>
<comment type="disease" evidence="9">
    <disease id="DI-01424">
        <name>Conotruncal heart malformations</name>
        <acronym>CTHM</acronym>
        <description>A group of congenital heart defects involving the outflow tracts. Examples include truncus arteriosus communis, double-outlet right ventricle and transposition of great arteries. Truncus arteriosus communis is characterized by a single outflow tract instead of a separate aorta and pulmonary artery. In transposition of the great arteries, the aorta arises from the right ventricle and the pulmonary artery from the left ventricle. In double outlet of the right ventricle, both the pulmonary artery and aorta arise from the right ventricle.</description>
        <dbReference type="MIM" id="217095"/>
    </disease>
    <text>The disease is caused by variants affecting the gene represented in this entry.</text>
</comment>
<comment type="miscellaneous">
    <molecule>Isoform 2</molecule>
    <text evidence="13">Sequence incomplete.</text>
</comment>
<comment type="similarity">
    <text evidence="4">Belongs to the FOG (Friend of GATA) family.</text>
</comment>
<organism>
    <name type="scientific">Homo sapiens</name>
    <name type="common">Human</name>
    <dbReference type="NCBI Taxonomy" id="9606"/>
    <lineage>
        <taxon>Eukaryota</taxon>
        <taxon>Metazoa</taxon>
        <taxon>Chordata</taxon>
        <taxon>Craniata</taxon>
        <taxon>Vertebrata</taxon>
        <taxon>Euteleostomi</taxon>
        <taxon>Mammalia</taxon>
        <taxon>Eutheria</taxon>
        <taxon>Euarchontoglires</taxon>
        <taxon>Primates</taxon>
        <taxon>Haplorrhini</taxon>
        <taxon>Catarrhini</taxon>
        <taxon>Hominidae</taxon>
        <taxon>Homo</taxon>
    </lineage>
</organism>
<reference key="1">
    <citation type="journal article" date="1999" name="J. Biol. Chem.">
        <title>hFOG-2, a novel zinc finger protein, binds the co-repressor mCtBP2 and modulates GATA-mediated activation.</title>
        <authorList>
            <person name="Holmes M."/>
            <person name="Turner J."/>
            <person name="Fox A.H."/>
            <person name="Chisholm O."/>
            <person name="Crossley M."/>
            <person name="Chong B."/>
        </authorList>
    </citation>
    <scope>NUCLEOTIDE SEQUENCE [MRNA] (ISOFORM 1)</scope>
    <scope>FUNCTION</scope>
    <scope>TISSUE SPECIFICITY</scope>
    <scope>INTERACTION WITH CTBP2</scope>
    <scope>POSSIBLE INTERACTION WITH GATA1</scope>
    <source>
        <tissue>Erythroleukemia</tissue>
    </source>
</reference>
<reference key="2">
    <citation type="journal article" date="2004" name="Genome Res.">
        <title>The status, quality, and expansion of the NIH full-length cDNA project: the Mammalian Gene Collection (MGC).</title>
        <authorList>
            <consortium name="The MGC Project Team"/>
        </authorList>
    </citation>
    <scope>NUCLEOTIDE SEQUENCE [LARGE SCALE MRNA] (ISOFORM 1)</scope>
    <source>
        <tissue>Prostate</tissue>
    </source>
</reference>
<reference key="3">
    <citation type="submission" date="2000-07" db="EMBL/GenBank/DDBJ databases">
        <authorList>
            <consortium name="The European IMAGE consortium"/>
        </authorList>
    </citation>
    <scope>NUCLEOTIDE SEQUENCE [LARGE SCALE MRNA] OF 1-287 (ISOFORM 2)</scope>
    <scope>NUCLEOTIDE SEQUENCE [LARGE SCALE MRNA] OF 641-1151 (ISOFORM 1)</scope>
</reference>
<reference key="4">
    <citation type="journal article" date="2012" name="PLoS ONE">
        <title>SUMOylation regulates the transcriptional repression activity of FOG-2 and its association with GATA-4.</title>
        <authorList>
            <person name="Perdomo J."/>
            <person name="Jiang X.M."/>
            <person name="Carter D.R."/>
            <person name="Khachigian L.M."/>
            <person name="Chong B.H."/>
        </authorList>
    </citation>
    <scope>SUMOYLATION AT LYS-324; LYS-471; LYS-915 AND LYS-955</scope>
    <scope>SUBCELLULAR LOCATION</scope>
</reference>
<reference key="5">
    <citation type="journal article" date="2013" name="J. Proteome Res.">
        <title>Toward a comprehensive characterization of a human cancer cell phosphoproteome.</title>
        <authorList>
            <person name="Zhou H."/>
            <person name="Di Palma S."/>
            <person name="Preisinger C."/>
            <person name="Peng M."/>
            <person name="Polat A.N."/>
            <person name="Heck A.J."/>
            <person name="Mohammed S."/>
        </authorList>
    </citation>
    <scope>PHOSPHORYLATION [LARGE SCALE ANALYSIS] AT SER-532; SER-581; SER-904 AND SER-1014</scope>
    <scope>IDENTIFICATION BY MASS SPECTROMETRY [LARGE SCALE ANALYSIS]</scope>
    <source>
        <tissue>Erythroleukemia</tissue>
    </source>
</reference>
<reference key="6">
    <citation type="journal article" date="2014" name="Hum. Mol. Genet.">
        <title>Mutations in the FOG2/ZFPM2 gene are associated with anomalies of human testis determination.</title>
        <authorList>
            <person name="Bashamboo A."/>
            <person name="Brauner R."/>
            <person name="Bignon-Topalovic J."/>
            <person name="Lortat-Jacob S."/>
            <person name="Karageorgou V."/>
            <person name="Lourenco D."/>
            <person name="Guffanti A."/>
            <person name="McElreavey K."/>
        </authorList>
    </citation>
    <scope>INTERACTION WITH GATA4</scope>
    <scope>INVOLVEMENT IN SRXY9</scope>
    <scope>VARIANTS SRXY9 GLN-260; ARG-402 AND ILE-544</scope>
    <scope>VARIANTS GLY-403 AND ASP-782</scope>
    <scope>CHARACTERIZATION OF VARIANTS GLN-260 AND ARG-402</scope>
</reference>
<reference key="7">
    <citation type="journal article" date="2017" name="Nat. Struct. Mol. Biol.">
        <title>Site-specific mapping of the human SUMO proteome reveals co-modification with phosphorylation.</title>
        <authorList>
            <person name="Hendriks I.A."/>
            <person name="Lyon D."/>
            <person name="Young C."/>
            <person name="Jensen L.J."/>
            <person name="Vertegaal A.C."/>
            <person name="Nielsen M.L."/>
        </authorList>
    </citation>
    <scope>SUMOYLATION [LARGE SCALE ANALYSIS] AT LYS-444</scope>
    <scope>IDENTIFICATION BY MASS SPECTROMETRY [LARGE SCALE ANALYSIS]</scope>
</reference>
<reference key="8">
    <citation type="journal article" date="2003" name="Hum. Mutat.">
        <title>Mutations of ZFPM2/FOG2 gene in sporadic cases of tetralogy of Fallot.</title>
        <authorList>
            <person name="Pizzuti A."/>
            <person name="Sarkozy A."/>
            <person name="Newton A.L."/>
            <person name="Conti E."/>
            <person name="Flex E."/>
            <person name="Digilio M.C."/>
            <person name="Amati F."/>
            <person name="Gianni D."/>
            <person name="Tandoi C."/>
            <person name="Marino B."/>
            <person name="Crossley M."/>
            <person name="Dallapiccola B."/>
        </authorList>
    </citation>
    <scope>VARIANTS TOF GLY-30 AND GLY-657</scope>
    <scope>CHARACTERIZATION OF VARIANTS TOF GLY-30 AND GLY-657</scope>
</reference>
<reference key="9">
    <citation type="journal article" date="2005" name="PLoS Genet.">
        <title>Fog2 is required for normal diaphragm and lung development in mice and humans.</title>
        <authorList>
            <person name="Ackerman K.G."/>
            <person name="Herron B.J."/>
            <person name="Vargas S.O."/>
            <person name="Huang H."/>
            <person name="Tevosian S.G."/>
            <person name="Kochilas L."/>
            <person name="Rao C."/>
            <person name="Pober B.R."/>
            <person name="Babiuk R.P."/>
            <person name="Epstein J.A."/>
            <person name="Greer J.J."/>
            <person name="Beier D.R."/>
        </authorList>
    </citation>
    <scope>INVOLVEMENT IN DIH3</scope>
</reference>
<reference key="10">
    <citation type="journal article" date="2011" name="Clin. Genet.">
        <title>New mutations in ZFPM2/FOG2 gene in tetralogy of Fallot and double outlet right ventricle.</title>
        <authorList>
            <person name="De Luca A."/>
            <person name="Sarkozy A."/>
            <person name="Ferese R."/>
            <person name="Consoli F."/>
            <person name="Lepri F."/>
            <person name="Dentici M.L."/>
            <person name="Vergara P."/>
            <person name="De Zorzi A."/>
            <person name="Versacci P."/>
            <person name="Digilio M.C."/>
            <person name="Marino B."/>
            <person name="Dallapiccola B."/>
        </authorList>
    </citation>
    <scope>VARIANT TOF ILE-544</scope>
    <scope>VARIANTS CTHM GLY-30 AND VAL-227</scope>
</reference>
<proteinExistence type="evidence at protein level"/>
<evidence type="ECO:0000250" key="1"/>
<evidence type="ECO:0000250" key="2">
    <source>
        <dbReference type="UniProtKB" id="Q8CCH7"/>
    </source>
</evidence>
<evidence type="ECO:0000255" key="3">
    <source>
        <dbReference type="PROSITE-ProRule" id="PRU00042"/>
    </source>
</evidence>
<evidence type="ECO:0000255" key="4">
    <source>
        <dbReference type="PROSITE-ProRule" id="PRU01153"/>
    </source>
</evidence>
<evidence type="ECO:0000256" key="5">
    <source>
        <dbReference type="SAM" id="MobiDB-lite"/>
    </source>
</evidence>
<evidence type="ECO:0000269" key="6">
    <source>
    </source>
</evidence>
<evidence type="ECO:0000269" key="7">
    <source>
    </source>
</evidence>
<evidence type="ECO:0000269" key="8">
    <source>
    </source>
</evidence>
<evidence type="ECO:0000269" key="9">
    <source>
    </source>
</evidence>
<evidence type="ECO:0000269" key="10">
    <source>
    </source>
</evidence>
<evidence type="ECO:0000269" key="11">
    <source>
    </source>
</evidence>
<evidence type="ECO:0000303" key="12">
    <source ref="3"/>
</evidence>
<evidence type="ECO:0000305" key="13"/>
<evidence type="ECO:0007744" key="14">
    <source>
    </source>
</evidence>
<evidence type="ECO:0007744" key="15">
    <source>
    </source>
</evidence>
<sequence>MSRRKQSKPRQIKRPLEDAIEDEEEECPSEETDIISKGDFPLEESFSTEFGPENLSCEEVEYFCNKGDDEGIQETAESDGDTQSEKPGQPGVETDDWDGPGELEVFQKDGERKIQSRQQLPVGTTWGPFPGKMDLNNNSLKTKAQVPMVLTAGPKWLLDVTWQGVEDNKNNCIVYSKGGQLWCTTTKAISEGEELIAFVVDFDSRLQAASQMTLTEGMYPARLLDSIQLLPQQAAMASILPTAIVNKDIFPCKSCGIWYRSERNLQAHLMYYCSGRQREAAPVSEENEDSAHQISSLCPFPQCTKSFSNARALEMHLNSHSGVKMEEFLPPGASLKCTVCSYTADSVINFHQHLFSHLTQAAFRCNHCHFGFQTQRELLQHQELHVPSGKLPRESDMEHSPSATEDSLQPATDLLTRSELPQSQKAMQTKDASSDTELDKCEKKTQLFLTNQRPEIQPTTNKQSFSYTKIKSEPSSPRLASSPVQPNIGPSFPVGPFLSQFSFPQDITMVPQASEILAKMSELVHRRLRHGSSSYPPVIYSPLMPKGATCFECNITFNNLDNYLVHKKHYCSSRWQQMAKSPEFPSVSEKMPEALSPNTGQTSINLLNPAAHSADPENPLLQTSCINSSTVLDLIGPNGKGHDKDFSTQTKKLSTSSNNDDKINGKPVDVKNPSVPLVDGESDPNKTTCEACNITFSRHETYMVHKQYYCATRHDPPLKRSASNKVPAMQRTMRTRKRRKMYEMCLPEQEQRPPLVQQRFLDVANLNNPCTSTQEPTEGLGECYHPRCDIFPGIVSKHLETSLTINKCVPVSKCDTTHSSVSCLEMDVPIDLSKKCLSQSERTTTSPKRLLDYHECTVCKISFNKVENYLAHKQNFCPVTAHQRNDLGQLDGKVFPNPESERNSPDVSYERSIIKCEKNGNLKQPSPNGNLFSSHLATLQGLKVFSEAAQLIATKEENRHLFLPQCLYPGAIKKAKGADQLSPYYGIKPSDYISGSLVIHNTDIEQSRNAENESPKGQASSNGCAALKKDSLPLLPKNRGMVIVNGGLKQDERPAANPQQENISQNPQHEDDHKSPSWISENPLAANENVSPGIPSAEEQLSSIAKGVNGSSQAPTSGKYCRLCDIQFNNLSNFITHKKFYCSSHAAEHVK</sequence>
<protein>
    <recommendedName>
        <fullName>Zinc finger protein ZFPM2</fullName>
    </recommendedName>
    <alternativeName>
        <fullName>Friend of GATA protein 2</fullName>
        <shortName>FOG-2</shortName>
        <shortName>Friend of GATA 2</shortName>
        <shortName>hFOG-2</shortName>
    </alternativeName>
    <alternativeName>
        <fullName>Zinc finger protein 89B</fullName>
    </alternativeName>
    <alternativeName>
        <fullName>Zinc finger protein multitype 2</fullName>
    </alternativeName>
</protein>
<accession>Q8WW38</accession>
<accession>Q32MA6</accession>
<accession>Q9NPL7</accession>
<accession>Q9NPS4</accession>
<accession>Q9UNI5</accession>